<name>Y041_NPVOP</name>
<feature type="chain" id="PRO_0000132978" description="Uncharacterized 19.0 kDa protein">
    <location>
        <begin position="1"/>
        <end position="171"/>
    </location>
</feature>
<proteinExistence type="predicted"/>
<dbReference type="EMBL" id="U75930">
    <property type="protein sequence ID" value="AAC59045.1"/>
    <property type="molecule type" value="Genomic_DNA"/>
</dbReference>
<dbReference type="RefSeq" id="NP_046202.1">
    <property type="nucleotide sequence ID" value="NC_001875.2"/>
</dbReference>
<dbReference type="KEGG" id="vg:911976"/>
<dbReference type="OrthoDB" id="11297at10239"/>
<dbReference type="Proteomes" id="UP000009248">
    <property type="component" value="Genome"/>
</dbReference>
<dbReference type="InterPro" id="IPR009365">
    <property type="entry name" value="Nucleo_LEF-12"/>
</dbReference>
<dbReference type="Pfam" id="PF06256">
    <property type="entry name" value="Nucleo_LEF-12"/>
    <property type="match status" value="1"/>
</dbReference>
<organism>
    <name type="scientific">Orgyia pseudotsugata multicapsid polyhedrosis virus</name>
    <name type="common">OpMNPV</name>
    <dbReference type="NCBI Taxonomy" id="262177"/>
    <lineage>
        <taxon>Viruses</taxon>
        <taxon>Viruses incertae sedis</taxon>
        <taxon>Naldaviricetes</taxon>
        <taxon>Lefavirales</taxon>
        <taxon>Baculoviridae</taxon>
        <taxon>Alphabaculovirus</taxon>
        <taxon>Alphabaculovirus orpseudotsugatae</taxon>
    </lineage>
</organism>
<gene>
    <name type="ORF">ORF46</name>
</gene>
<protein>
    <recommendedName>
        <fullName>Uncharacterized 19.0 kDa protein</fullName>
    </recommendedName>
</protein>
<accession>O10301</accession>
<organismHost>
    <name type="scientific">Orgyia pseudotsugata</name>
    <name type="common">Douglas-fir tussock moth</name>
    <dbReference type="NCBI Taxonomy" id="33414"/>
</organismHost>
<sequence length="171" mass="19029">METLAISDKEQFQTRLAYVADIAAMMQRTLQFMAVHGACTRADAATLCLADDTAAWVCGRGAAPAFASFRVRIAGFQHPCRALAHFMFEESLAQRCSKPLPRYTYMNYAFFRGVLAIKLSVYVGDLHADGLPYFVDFARGRALVRTRAPLQFPLPPFERRVEEAVAQSAAK</sequence>
<keyword id="KW-1185">Reference proteome</keyword>
<reference key="1">
    <citation type="journal article" date="1997" name="Virology">
        <title>The sequence of the Orgyia pseudotsugata multinucleocapsid nuclear polyhedrosis virus genome.</title>
        <authorList>
            <person name="Ahrens C.H."/>
            <person name="Russell R.R."/>
            <person name="Funk C.J."/>
            <person name="Evans J."/>
            <person name="Harwood S."/>
            <person name="Rohrmann G.F."/>
        </authorList>
    </citation>
    <scope>NUCLEOTIDE SEQUENCE [LARGE SCALE GENOMIC DNA]</scope>
</reference>